<keyword id="KW-0963">Cytoplasm</keyword>
<keyword id="KW-0520">NAD</keyword>
<keyword id="KW-0560">Oxidoreductase</keyword>
<organism>
    <name type="scientific">Lycodichthys dearborni</name>
    <name type="common">Antarctic eelpout</name>
    <name type="synonym">Rhigophila dearborni</name>
    <dbReference type="NCBI Taxonomy" id="8201"/>
    <lineage>
        <taxon>Eukaryota</taxon>
        <taxon>Metazoa</taxon>
        <taxon>Chordata</taxon>
        <taxon>Craniata</taxon>
        <taxon>Vertebrata</taxon>
        <taxon>Euteleostomi</taxon>
        <taxon>Actinopterygii</taxon>
        <taxon>Neopterygii</taxon>
        <taxon>Teleostei</taxon>
        <taxon>Neoteleostei</taxon>
        <taxon>Acanthomorphata</taxon>
        <taxon>Eupercaria</taxon>
        <taxon>Perciformes</taxon>
        <taxon>Cottioidei</taxon>
        <taxon>Zoarcales</taxon>
        <taxon>Zoarcidae</taxon>
        <taxon>Lycodinae</taxon>
        <taxon>Lycodichthys</taxon>
    </lineage>
</organism>
<dbReference type="EC" id="1.1.1.27" evidence="2"/>
<dbReference type="EMBL" id="AF170710">
    <property type="protein sequence ID" value="AAD48489.1"/>
    <property type="molecule type" value="mRNA"/>
</dbReference>
<dbReference type="SMR" id="Q9PW58"/>
<dbReference type="UniPathway" id="UPA00554">
    <property type="reaction ID" value="UER00611"/>
</dbReference>
<dbReference type="GO" id="GO:0005737">
    <property type="term" value="C:cytoplasm"/>
    <property type="evidence" value="ECO:0007669"/>
    <property type="project" value="UniProtKB-SubCell"/>
</dbReference>
<dbReference type="GO" id="GO:0004459">
    <property type="term" value="F:L-lactate dehydrogenase activity"/>
    <property type="evidence" value="ECO:0007669"/>
    <property type="project" value="UniProtKB-EC"/>
</dbReference>
<dbReference type="GO" id="GO:0006089">
    <property type="term" value="P:lactate metabolic process"/>
    <property type="evidence" value="ECO:0007669"/>
    <property type="project" value="TreeGrafter"/>
</dbReference>
<dbReference type="CDD" id="cd05293">
    <property type="entry name" value="LDH_1"/>
    <property type="match status" value="1"/>
</dbReference>
<dbReference type="FunFam" id="3.40.50.720:FF:000029">
    <property type="entry name" value="L-lactate dehydrogenase A chain"/>
    <property type="match status" value="1"/>
</dbReference>
<dbReference type="FunFam" id="3.90.110.10:FF:000003">
    <property type="entry name" value="L-lactate dehydrogenase A chain"/>
    <property type="match status" value="1"/>
</dbReference>
<dbReference type="Gene3D" id="3.90.110.10">
    <property type="entry name" value="Lactate dehydrogenase/glycoside hydrolase, family 4, C-terminal"/>
    <property type="match status" value="1"/>
</dbReference>
<dbReference type="Gene3D" id="3.40.50.720">
    <property type="entry name" value="NAD(P)-binding Rossmann-like Domain"/>
    <property type="match status" value="1"/>
</dbReference>
<dbReference type="HAMAP" id="MF_00488">
    <property type="entry name" value="Lactate_dehydrog"/>
    <property type="match status" value="1"/>
</dbReference>
<dbReference type="InterPro" id="IPR001557">
    <property type="entry name" value="L-lactate/malate_DH"/>
</dbReference>
<dbReference type="InterPro" id="IPR011304">
    <property type="entry name" value="L-lactate_DH"/>
</dbReference>
<dbReference type="InterPro" id="IPR018177">
    <property type="entry name" value="L-lactate_DH_AS"/>
</dbReference>
<dbReference type="InterPro" id="IPR022383">
    <property type="entry name" value="Lactate/malate_DH_C"/>
</dbReference>
<dbReference type="InterPro" id="IPR001236">
    <property type="entry name" value="Lactate/malate_DH_N"/>
</dbReference>
<dbReference type="InterPro" id="IPR015955">
    <property type="entry name" value="Lactate_DH/Glyco_Ohase_4_C"/>
</dbReference>
<dbReference type="InterPro" id="IPR036291">
    <property type="entry name" value="NAD(P)-bd_dom_sf"/>
</dbReference>
<dbReference type="NCBIfam" id="TIGR01771">
    <property type="entry name" value="L-LDH-NAD"/>
    <property type="match status" value="1"/>
</dbReference>
<dbReference type="PANTHER" id="PTHR43128">
    <property type="entry name" value="L-2-HYDROXYCARBOXYLATE DEHYDROGENASE (NAD(P)(+))"/>
    <property type="match status" value="1"/>
</dbReference>
<dbReference type="PANTHER" id="PTHR43128:SF10">
    <property type="entry name" value="L-LACTATE DEHYDROGENASE A CHAIN"/>
    <property type="match status" value="1"/>
</dbReference>
<dbReference type="Pfam" id="PF02866">
    <property type="entry name" value="Ldh_1_C"/>
    <property type="match status" value="1"/>
</dbReference>
<dbReference type="Pfam" id="PF00056">
    <property type="entry name" value="Ldh_1_N"/>
    <property type="match status" value="1"/>
</dbReference>
<dbReference type="PIRSF" id="PIRSF000102">
    <property type="entry name" value="Lac_mal_DH"/>
    <property type="match status" value="1"/>
</dbReference>
<dbReference type="PRINTS" id="PR00086">
    <property type="entry name" value="LLDHDRGNASE"/>
</dbReference>
<dbReference type="SUPFAM" id="SSF56327">
    <property type="entry name" value="LDH C-terminal domain-like"/>
    <property type="match status" value="1"/>
</dbReference>
<dbReference type="SUPFAM" id="SSF51735">
    <property type="entry name" value="NAD(P)-binding Rossmann-fold domains"/>
    <property type="match status" value="1"/>
</dbReference>
<dbReference type="PROSITE" id="PS00064">
    <property type="entry name" value="L_LDH"/>
    <property type="match status" value="1"/>
</dbReference>
<feature type="initiator methionine" description="Removed" evidence="1">
    <location>
        <position position="1"/>
    </location>
</feature>
<feature type="chain" id="PRO_0000168451" description="L-lactate dehydrogenase A chain">
    <location>
        <begin position="2"/>
        <end position="332"/>
    </location>
</feature>
<feature type="active site" description="Proton acceptor" evidence="1">
    <location>
        <position position="193"/>
    </location>
</feature>
<feature type="binding site" evidence="1">
    <location>
        <begin position="29"/>
        <end position="57"/>
    </location>
    <ligand>
        <name>NAD(+)</name>
        <dbReference type="ChEBI" id="CHEBI:57540"/>
    </ligand>
</feature>
<feature type="binding site" evidence="1">
    <location>
        <position position="99"/>
    </location>
    <ligand>
        <name>NAD(+)</name>
        <dbReference type="ChEBI" id="CHEBI:57540"/>
    </ligand>
</feature>
<feature type="binding site" evidence="1">
    <location>
        <position position="106"/>
    </location>
    <ligand>
        <name>substrate</name>
    </ligand>
</feature>
<feature type="binding site" evidence="1">
    <location>
        <position position="138"/>
    </location>
    <ligand>
        <name>NAD(+)</name>
        <dbReference type="ChEBI" id="CHEBI:57540"/>
    </ligand>
</feature>
<feature type="binding site" evidence="1">
    <location>
        <position position="138"/>
    </location>
    <ligand>
        <name>substrate</name>
    </ligand>
</feature>
<feature type="binding site" evidence="1">
    <location>
        <position position="169"/>
    </location>
    <ligand>
        <name>substrate</name>
    </ligand>
</feature>
<feature type="binding site" evidence="1">
    <location>
        <position position="248"/>
    </location>
    <ligand>
        <name>substrate</name>
    </ligand>
</feature>
<protein>
    <recommendedName>
        <fullName>L-lactate dehydrogenase A chain</fullName>
        <shortName>LDH-A</shortName>
        <ecNumber evidence="2">1.1.1.27</ecNumber>
    </recommendedName>
</protein>
<accession>Q9PW58</accession>
<proteinExistence type="evidence at transcript level"/>
<sequence>MSTKEKLISHVMKEEPVGSRSKVTVVGVGMVGMASAISVLLKDLCDELALVDVMEEKLKGEVMDLQHGSLFLKTHKIVADKDYSVTANSKVVVVTAGARQQEGESRLNLVQRNVNIFKFIIPNIVKYSPNCIIMVVSNPVDILTYVAWKLSGFPRHRVIGSGTNLDSARFRHLMGEKLNIHPSSCHGWIVGEHGDSSVPVWSGVNVAGVSLQGLNPKMGVEGDSENWKAVHKQVVDGAYEVIRLKGYTSWAIGMSVADLVESIIKNLHKVHPVSTLVQGMHGVKDEVFMSIPCVLGNSGLTDVIHMTLKAEEEKQLVTSAETLWGVQKELTL</sequence>
<comment type="function">
    <text evidence="2">Interconverts simultaneously and stereospecifically pyruvate and lactate with concomitant interconversion of NADH and NAD(+).</text>
</comment>
<comment type="catalytic activity">
    <reaction evidence="2">
        <text>(S)-lactate + NAD(+) = pyruvate + NADH + H(+)</text>
        <dbReference type="Rhea" id="RHEA:23444"/>
        <dbReference type="ChEBI" id="CHEBI:15361"/>
        <dbReference type="ChEBI" id="CHEBI:15378"/>
        <dbReference type="ChEBI" id="CHEBI:16651"/>
        <dbReference type="ChEBI" id="CHEBI:57540"/>
        <dbReference type="ChEBI" id="CHEBI:57945"/>
        <dbReference type="EC" id="1.1.1.27"/>
    </reaction>
    <physiologicalReaction direction="left-to-right" evidence="2">
        <dbReference type="Rhea" id="RHEA:23445"/>
    </physiologicalReaction>
    <physiologicalReaction direction="right-to-left" evidence="2">
        <dbReference type="Rhea" id="RHEA:23446"/>
    </physiologicalReaction>
</comment>
<comment type="pathway">
    <text evidence="2">Fermentation; pyruvate fermentation to lactate; (S)-lactate from pyruvate: step 1/1.</text>
</comment>
<comment type="subunit">
    <text evidence="1">Homotetramer.</text>
</comment>
<comment type="subcellular location">
    <subcellularLocation>
        <location evidence="1">Cytoplasm</location>
    </subcellularLocation>
</comment>
<comment type="similarity">
    <text evidence="3">Belongs to the LDH/MDH superfamily. LDH family.</text>
</comment>
<evidence type="ECO:0000250" key="1"/>
<evidence type="ECO:0000250" key="2">
    <source>
        <dbReference type="UniProtKB" id="P00338"/>
    </source>
</evidence>
<evidence type="ECO:0000305" key="3"/>
<reference key="1">
    <citation type="submission" date="1999-07" db="EMBL/GenBank/DDBJ databases">
        <title>Cold adaptation in lactate dehydrogenase from Antarctic fish.</title>
        <authorList>
            <person name="Marshall C.J."/>
            <person name="Sharpe M.L."/>
            <person name="Love C.A."/>
        </authorList>
    </citation>
    <scope>NUCLEOTIDE SEQUENCE [MRNA]</scope>
</reference>
<name>LDHA_LYCDA</name>
<gene>
    <name type="primary">ldha</name>
</gene>